<sequence>MVLLYSQASWDQRSKADALVLPFWMKNSKAQEAAVVDEDYKLVYQNALSNFSGKKGETAFLFGNDHTKEQKIVLLGLGKSEEVSGTTVLEAYAQATTVLRKAKCKTVNILFPTISQLRFSVEEFLTNLAAGVLSLNYNYPTYHKVDTSLPFLEKVTVMGIVSKVGDKIFRKEESLFEGVYLTRDLVNTNADEVTPEKLAAVAKGLAGEFASLDVKILDRKAILKEKMGLLAAVAKGAAVEPRFIVLDYQGKPKSKDRTVLIGKGVTFDSGGLDLKPGKAMITMKEDMAGAATVLGIFSALASLELPINVTGIIPATENAIGSAAYKMGDVYVGMTGLSVEIGSTDAEGRLILADAISYALKYCNPTRIIDFATLTGAMVVSLGESVAGFFANNDVLARDLAEASSETGEALWRMPLVEKYDQALHSDIADMKNIGSNRAGSITAALFLQRFLEDNPVAWAHLDIAGTAYHEKEELPYPKYATGFGVRCLIHYMEKFLSK</sequence>
<evidence type="ECO:0000255" key="1">
    <source>
        <dbReference type="HAMAP-Rule" id="MF_00181"/>
    </source>
</evidence>
<accession>B0BB32</accession>
<keyword id="KW-0031">Aminopeptidase</keyword>
<keyword id="KW-0963">Cytoplasm</keyword>
<keyword id="KW-0378">Hydrolase</keyword>
<keyword id="KW-0464">Manganese</keyword>
<keyword id="KW-0479">Metal-binding</keyword>
<keyword id="KW-0645">Protease</keyword>
<reference key="1">
    <citation type="journal article" date="2008" name="Genome Res.">
        <title>Chlamydia trachomatis: genome sequence analysis of lymphogranuloma venereum isolates.</title>
        <authorList>
            <person name="Thomson N.R."/>
            <person name="Holden M.T.G."/>
            <person name="Carder C."/>
            <person name="Lennard N."/>
            <person name="Lockey S.J."/>
            <person name="Marsh P."/>
            <person name="Skipp P."/>
            <person name="O'Connor C.D."/>
            <person name="Goodhead I."/>
            <person name="Norbertzcak H."/>
            <person name="Harris B."/>
            <person name="Ormond D."/>
            <person name="Rance R."/>
            <person name="Quail M.A."/>
            <person name="Parkhill J."/>
            <person name="Stephens R.S."/>
            <person name="Clarke I.N."/>
        </authorList>
    </citation>
    <scope>NUCLEOTIDE SEQUENCE [LARGE SCALE GENOMIC DNA]</scope>
    <source>
        <strain>UCH-1/proctitis</strain>
    </source>
</reference>
<proteinExistence type="inferred from homology"/>
<comment type="function">
    <text evidence="1">Presumably involved in the processing and regular turnover of intracellular proteins. Catalyzes the removal of unsubstituted N-terminal amino acids from various peptides.</text>
</comment>
<comment type="catalytic activity">
    <reaction evidence="1">
        <text>Release of an N-terminal amino acid, Xaa-|-Yaa-, in which Xaa is preferably Leu, but may be other amino acids including Pro although not Arg or Lys, and Yaa may be Pro. Amino acid amides and methyl esters are also readily hydrolyzed, but rates on arylamides are exceedingly low.</text>
        <dbReference type="EC" id="3.4.11.1"/>
    </reaction>
</comment>
<comment type="catalytic activity">
    <reaction evidence="1">
        <text>Release of an N-terminal amino acid, preferentially leucine, but not glutamic or aspartic acids.</text>
        <dbReference type="EC" id="3.4.11.10"/>
    </reaction>
</comment>
<comment type="cofactor">
    <cofactor evidence="1">
        <name>Mn(2+)</name>
        <dbReference type="ChEBI" id="CHEBI:29035"/>
    </cofactor>
    <text evidence="1">Binds 2 manganese ions per subunit.</text>
</comment>
<comment type="subcellular location">
    <subcellularLocation>
        <location evidence="1">Cytoplasm</location>
    </subcellularLocation>
</comment>
<comment type="similarity">
    <text evidence="1">Belongs to the peptidase M17 family.</text>
</comment>
<dbReference type="EC" id="3.4.11.1" evidence="1"/>
<dbReference type="EC" id="3.4.11.10" evidence="1"/>
<dbReference type="EMBL" id="AM884177">
    <property type="protein sequence ID" value="CAP06694.1"/>
    <property type="molecule type" value="Genomic_DNA"/>
</dbReference>
<dbReference type="RefSeq" id="WP_009873516.1">
    <property type="nucleotide sequence ID" value="NC_010280.2"/>
</dbReference>
<dbReference type="SMR" id="B0BB32"/>
<dbReference type="KEGG" id="ctl:CTLon_0296"/>
<dbReference type="HOGENOM" id="CLU_013734_2_2_0"/>
<dbReference type="Proteomes" id="UP001154401">
    <property type="component" value="Chromosome"/>
</dbReference>
<dbReference type="GO" id="GO:0005737">
    <property type="term" value="C:cytoplasm"/>
    <property type="evidence" value="ECO:0007669"/>
    <property type="project" value="UniProtKB-SubCell"/>
</dbReference>
<dbReference type="GO" id="GO:0030145">
    <property type="term" value="F:manganese ion binding"/>
    <property type="evidence" value="ECO:0007669"/>
    <property type="project" value="UniProtKB-UniRule"/>
</dbReference>
<dbReference type="GO" id="GO:0070006">
    <property type="term" value="F:metalloaminopeptidase activity"/>
    <property type="evidence" value="ECO:0007669"/>
    <property type="project" value="InterPro"/>
</dbReference>
<dbReference type="GO" id="GO:0006508">
    <property type="term" value="P:proteolysis"/>
    <property type="evidence" value="ECO:0007669"/>
    <property type="project" value="UniProtKB-KW"/>
</dbReference>
<dbReference type="CDD" id="cd00433">
    <property type="entry name" value="Peptidase_M17"/>
    <property type="match status" value="1"/>
</dbReference>
<dbReference type="Gene3D" id="3.40.220.10">
    <property type="entry name" value="Leucine Aminopeptidase, subunit E, domain 1"/>
    <property type="match status" value="1"/>
</dbReference>
<dbReference type="Gene3D" id="3.40.630.10">
    <property type="entry name" value="Zn peptidases"/>
    <property type="match status" value="1"/>
</dbReference>
<dbReference type="HAMAP" id="MF_00181">
    <property type="entry name" value="Cytosol_peptidase_M17"/>
    <property type="match status" value="1"/>
</dbReference>
<dbReference type="InterPro" id="IPR011356">
    <property type="entry name" value="Leucine_aapep/pepB"/>
</dbReference>
<dbReference type="InterPro" id="IPR043472">
    <property type="entry name" value="Macro_dom-like"/>
</dbReference>
<dbReference type="InterPro" id="IPR000819">
    <property type="entry name" value="Peptidase_M17_C"/>
</dbReference>
<dbReference type="InterPro" id="IPR023042">
    <property type="entry name" value="Peptidase_M17_leu_NH2_pept"/>
</dbReference>
<dbReference type="InterPro" id="IPR008283">
    <property type="entry name" value="Peptidase_M17_N"/>
</dbReference>
<dbReference type="NCBIfam" id="NF002078">
    <property type="entry name" value="PRK00913.2-5"/>
    <property type="match status" value="1"/>
</dbReference>
<dbReference type="NCBIfam" id="NF002083">
    <property type="entry name" value="PRK00913.3-5"/>
    <property type="match status" value="1"/>
</dbReference>
<dbReference type="PANTHER" id="PTHR11963:SF23">
    <property type="entry name" value="CYTOSOL AMINOPEPTIDASE"/>
    <property type="match status" value="1"/>
</dbReference>
<dbReference type="PANTHER" id="PTHR11963">
    <property type="entry name" value="LEUCINE AMINOPEPTIDASE-RELATED"/>
    <property type="match status" value="1"/>
</dbReference>
<dbReference type="Pfam" id="PF00883">
    <property type="entry name" value="Peptidase_M17"/>
    <property type="match status" value="1"/>
</dbReference>
<dbReference type="Pfam" id="PF02789">
    <property type="entry name" value="Peptidase_M17_N"/>
    <property type="match status" value="1"/>
</dbReference>
<dbReference type="PRINTS" id="PR00481">
    <property type="entry name" value="LAMNOPPTDASE"/>
</dbReference>
<dbReference type="SUPFAM" id="SSF52949">
    <property type="entry name" value="Macro domain-like"/>
    <property type="match status" value="1"/>
</dbReference>
<dbReference type="SUPFAM" id="SSF53187">
    <property type="entry name" value="Zn-dependent exopeptidases"/>
    <property type="match status" value="1"/>
</dbReference>
<dbReference type="PROSITE" id="PS00631">
    <property type="entry name" value="CYTOSOL_AP"/>
    <property type="match status" value="1"/>
</dbReference>
<organism>
    <name type="scientific">Chlamydia trachomatis serovar L2b (strain UCH-1/proctitis)</name>
    <dbReference type="NCBI Taxonomy" id="471473"/>
    <lineage>
        <taxon>Bacteria</taxon>
        <taxon>Pseudomonadati</taxon>
        <taxon>Chlamydiota</taxon>
        <taxon>Chlamydiia</taxon>
        <taxon>Chlamydiales</taxon>
        <taxon>Chlamydiaceae</taxon>
        <taxon>Chlamydia/Chlamydophila group</taxon>
        <taxon>Chlamydia</taxon>
    </lineage>
</organism>
<gene>
    <name evidence="1" type="primary">pepA</name>
    <name type="ordered locus">CTLon_0296</name>
</gene>
<feature type="chain" id="PRO_1000098317" description="Probable cytosol aminopeptidase">
    <location>
        <begin position="1"/>
        <end position="499"/>
    </location>
</feature>
<feature type="active site" evidence="1">
    <location>
        <position position="275"/>
    </location>
</feature>
<feature type="active site" evidence="1">
    <location>
        <position position="349"/>
    </location>
</feature>
<feature type="binding site" evidence="1">
    <location>
        <position position="263"/>
    </location>
    <ligand>
        <name>Mn(2+)</name>
        <dbReference type="ChEBI" id="CHEBI:29035"/>
        <label>2</label>
    </ligand>
</feature>
<feature type="binding site" evidence="1">
    <location>
        <position position="268"/>
    </location>
    <ligand>
        <name>Mn(2+)</name>
        <dbReference type="ChEBI" id="CHEBI:29035"/>
        <label>1</label>
    </ligand>
</feature>
<feature type="binding site" evidence="1">
    <location>
        <position position="268"/>
    </location>
    <ligand>
        <name>Mn(2+)</name>
        <dbReference type="ChEBI" id="CHEBI:29035"/>
        <label>2</label>
    </ligand>
</feature>
<feature type="binding site" evidence="1">
    <location>
        <position position="286"/>
    </location>
    <ligand>
        <name>Mn(2+)</name>
        <dbReference type="ChEBI" id="CHEBI:29035"/>
        <label>2</label>
    </ligand>
</feature>
<feature type="binding site" evidence="1">
    <location>
        <position position="345"/>
    </location>
    <ligand>
        <name>Mn(2+)</name>
        <dbReference type="ChEBI" id="CHEBI:29035"/>
        <label>1</label>
    </ligand>
</feature>
<feature type="binding site" evidence="1">
    <location>
        <position position="347"/>
    </location>
    <ligand>
        <name>Mn(2+)</name>
        <dbReference type="ChEBI" id="CHEBI:29035"/>
        <label>1</label>
    </ligand>
</feature>
<feature type="binding site" evidence="1">
    <location>
        <position position="347"/>
    </location>
    <ligand>
        <name>Mn(2+)</name>
        <dbReference type="ChEBI" id="CHEBI:29035"/>
        <label>2</label>
    </ligand>
</feature>
<name>AMPA_CHLTB</name>
<protein>
    <recommendedName>
        <fullName evidence="1">Probable cytosol aminopeptidase</fullName>
        <ecNumber evidence="1">3.4.11.1</ecNumber>
    </recommendedName>
    <alternativeName>
        <fullName evidence="1">Leucine aminopeptidase</fullName>
        <shortName evidence="1">LAP</shortName>
        <ecNumber evidence="1">3.4.11.10</ecNumber>
    </alternativeName>
    <alternativeName>
        <fullName evidence="1">Leucyl aminopeptidase</fullName>
    </alternativeName>
</protein>